<gene>
    <name evidence="1" type="primary">argG</name>
    <name type="ordered locus">Pnec_1468</name>
</gene>
<keyword id="KW-0028">Amino-acid biosynthesis</keyword>
<keyword id="KW-0055">Arginine biosynthesis</keyword>
<keyword id="KW-0067">ATP-binding</keyword>
<keyword id="KW-0963">Cytoplasm</keyword>
<keyword id="KW-0436">Ligase</keyword>
<keyword id="KW-0547">Nucleotide-binding</keyword>
<name>ASSY_POLNS</name>
<protein>
    <recommendedName>
        <fullName evidence="1">Argininosuccinate synthase</fullName>
        <ecNumber evidence="1">6.3.4.5</ecNumber>
    </recommendedName>
    <alternativeName>
        <fullName evidence="1">Citrulline--aspartate ligase</fullName>
    </alternativeName>
</protein>
<proteinExistence type="inferred from homology"/>
<dbReference type="EC" id="6.3.4.5" evidence="1"/>
<dbReference type="EMBL" id="CP001010">
    <property type="protein sequence ID" value="ACB44561.1"/>
    <property type="molecule type" value="Genomic_DNA"/>
</dbReference>
<dbReference type="SMR" id="B1XRS6"/>
<dbReference type="STRING" id="452638.Pnec_1468"/>
<dbReference type="KEGG" id="pne:Pnec_1468"/>
<dbReference type="eggNOG" id="COG0137">
    <property type="taxonomic scope" value="Bacteria"/>
</dbReference>
<dbReference type="HOGENOM" id="CLU_032784_4_2_4"/>
<dbReference type="OrthoDB" id="9801641at2"/>
<dbReference type="UniPathway" id="UPA00068">
    <property type="reaction ID" value="UER00113"/>
</dbReference>
<dbReference type="GO" id="GO:0005737">
    <property type="term" value="C:cytoplasm"/>
    <property type="evidence" value="ECO:0007669"/>
    <property type="project" value="UniProtKB-SubCell"/>
</dbReference>
<dbReference type="GO" id="GO:0004055">
    <property type="term" value="F:argininosuccinate synthase activity"/>
    <property type="evidence" value="ECO:0007669"/>
    <property type="project" value="UniProtKB-UniRule"/>
</dbReference>
<dbReference type="GO" id="GO:0005524">
    <property type="term" value="F:ATP binding"/>
    <property type="evidence" value="ECO:0007669"/>
    <property type="project" value="UniProtKB-UniRule"/>
</dbReference>
<dbReference type="GO" id="GO:0000053">
    <property type="term" value="P:argininosuccinate metabolic process"/>
    <property type="evidence" value="ECO:0007669"/>
    <property type="project" value="TreeGrafter"/>
</dbReference>
<dbReference type="GO" id="GO:0006526">
    <property type="term" value="P:L-arginine biosynthetic process"/>
    <property type="evidence" value="ECO:0007669"/>
    <property type="project" value="UniProtKB-UniRule"/>
</dbReference>
<dbReference type="GO" id="GO:0000050">
    <property type="term" value="P:urea cycle"/>
    <property type="evidence" value="ECO:0007669"/>
    <property type="project" value="TreeGrafter"/>
</dbReference>
<dbReference type="CDD" id="cd01999">
    <property type="entry name" value="ASS"/>
    <property type="match status" value="1"/>
</dbReference>
<dbReference type="FunFam" id="1.20.5.470:FF:000001">
    <property type="entry name" value="Argininosuccinate synthase"/>
    <property type="match status" value="1"/>
</dbReference>
<dbReference type="FunFam" id="3.40.50.620:FF:000019">
    <property type="entry name" value="Argininosuccinate synthase"/>
    <property type="match status" value="1"/>
</dbReference>
<dbReference type="FunFam" id="3.90.1260.10:FF:000007">
    <property type="entry name" value="Argininosuccinate synthase"/>
    <property type="match status" value="1"/>
</dbReference>
<dbReference type="Gene3D" id="3.90.1260.10">
    <property type="entry name" value="Argininosuccinate synthetase, chain A, domain 2"/>
    <property type="match status" value="1"/>
</dbReference>
<dbReference type="Gene3D" id="3.40.50.620">
    <property type="entry name" value="HUPs"/>
    <property type="match status" value="1"/>
</dbReference>
<dbReference type="Gene3D" id="1.20.5.470">
    <property type="entry name" value="Single helix bin"/>
    <property type="match status" value="1"/>
</dbReference>
<dbReference type="HAMAP" id="MF_00005">
    <property type="entry name" value="Arg_succ_synth_type1"/>
    <property type="match status" value="1"/>
</dbReference>
<dbReference type="InterPro" id="IPR048268">
    <property type="entry name" value="Arginosuc_syn_C"/>
</dbReference>
<dbReference type="InterPro" id="IPR048267">
    <property type="entry name" value="Arginosuc_syn_N"/>
</dbReference>
<dbReference type="InterPro" id="IPR001518">
    <property type="entry name" value="Arginosuc_synth"/>
</dbReference>
<dbReference type="InterPro" id="IPR018223">
    <property type="entry name" value="Arginosuc_synth_CS"/>
</dbReference>
<dbReference type="InterPro" id="IPR023434">
    <property type="entry name" value="Arginosuc_synth_type_1_subfam"/>
</dbReference>
<dbReference type="InterPro" id="IPR024074">
    <property type="entry name" value="AS_cat/multimer_dom_body"/>
</dbReference>
<dbReference type="InterPro" id="IPR014729">
    <property type="entry name" value="Rossmann-like_a/b/a_fold"/>
</dbReference>
<dbReference type="NCBIfam" id="TIGR00032">
    <property type="entry name" value="argG"/>
    <property type="match status" value="1"/>
</dbReference>
<dbReference type="NCBIfam" id="NF001770">
    <property type="entry name" value="PRK00509.1"/>
    <property type="match status" value="1"/>
</dbReference>
<dbReference type="PANTHER" id="PTHR11587">
    <property type="entry name" value="ARGININOSUCCINATE SYNTHASE"/>
    <property type="match status" value="1"/>
</dbReference>
<dbReference type="PANTHER" id="PTHR11587:SF2">
    <property type="entry name" value="ARGININOSUCCINATE SYNTHASE"/>
    <property type="match status" value="1"/>
</dbReference>
<dbReference type="Pfam" id="PF20979">
    <property type="entry name" value="Arginosuc_syn_C"/>
    <property type="match status" value="1"/>
</dbReference>
<dbReference type="Pfam" id="PF00764">
    <property type="entry name" value="Arginosuc_synth"/>
    <property type="match status" value="1"/>
</dbReference>
<dbReference type="SUPFAM" id="SSF52402">
    <property type="entry name" value="Adenine nucleotide alpha hydrolases-like"/>
    <property type="match status" value="1"/>
</dbReference>
<dbReference type="SUPFAM" id="SSF69864">
    <property type="entry name" value="Argininosuccinate synthetase, C-terminal domain"/>
    <property type="match status" value="1"/>
</dbReference>
<dbReference type="PROSITE" id="PS00564">
    <property type="entry name" value="ARGININOSUCCIN_SYN_1"/>
    <property type="match status" value="1"/>
</dbReference>
<dbReference type="PROSITE" id="PS00565">
    <property type="entry name" value="ARGININOSUCCIN_SYN_2"/>
    <property type="match status" value="1"/>
</dbReference>
<comment type="catalytic activity">
    <reaction evidence="1">
        <text>L-citrulline + L-aspartate + ATP = 2-(N(omega)-L-arginino)succinate + AMP + diphosphate + H(+)</text>
        <dbReference type="Rhea" id="RHEA:10932"/>
        <dbReference type="ChEBI" id="CHEBI:15378"/>
        <dbReference type="ChEBI" id="CHEBI:29991"/>
        <dbReference type="ChEBI" id="CHEBI:30616"/>
        <dbReference type="ChEBI" id="CHEBI:33019"/>
        <dbReference type="ChEBI" id="CHEBI:57472"/>
        <dbReference type="ChEBI" id="CHEBI:57743"/>
        <dbReference type="ChEBI" id="CHEBI:456215"/>
        <dbReference type="EC" id="6.3.4.5"/>
    </reaction>
</comment>
<comment type="pathway">
    <text evidence="1">Amino-acid biosynthesis; L-arginine biosynthesis; L-arginine from L-ornithine and carbamoyl phosphate: step 2/3.</text>
</comment>
<comment type="subunit">
    <text evidence="1">Homotetramer.</text>
</comment>
<comment type="subcellular location">
    <subcellularLocation>
        <location evidence="1">Cytoplasm</location>
    </subcellularLocation>
</comment>
<comment type="similarity">
    <text evidence="1">Belongs to the argininosuccinate synthase family. Type 1 subfamily.</text>
</comment>
<evidence type="ECO:0000255" key="1">
    <source>
        <dbReference type="HAMAP-Rule" id="MF_00005"/>
    </source>
</evidence>
<organism>
    <name type="scientific">Polynucleobacter necessarius subsp. necessarius (strain STIR1)</name>
    <dbReference type="NCBI Taxonomy" id="452638"/>
    <lineage>
        <taxon>Bacteria</taxon>
        <taxon>Pseudomonadati</taxon>
        <taxon>Pseudomonadota</taxon>
        <taxon>Betaproteobacteria</taxon>
        <taxon>Burkholderiales</taxon>
        <taxon>Burkholderiaceae</taxon>
        <taxon>Polynucleobacter</taxon>
    </lineage>
</organism>
<feature type="chain" id="PRO_1000089048" description="Argininosuccinate synthase">
    <location>
        <begin position="1"/>
        <end position="410"/>
    </location>
</feature>
<feature type="binding site" evidence="1">
    <location>
        <begin position="10"/>
        <end position="18"/>
    </location>
    <ligand>
        <name>ATP</name>
        <dbReference type="ChEBI" id="CHEBI:30616"/>
    </ligand>
</feature>
<feature type="binding site" evidence="1">
    <location>
        <position position="37"/>
    </location>
    <ligand>
        <name>ATP</name>
        <dbReference type="ChEBI" id="CHEBI:30616"/>
    </ligand>
</feature>
<feature type="binding site" evidence="1">
    <location>
        <position position="90"/>
    </location>
    <ligand>
        <name>L-citrulline</name>
        <dbReference type="ChEBI" id="CHEBI:57743"/>
    </ligand>
</feature>
<feature type="binding site" evidence="1">
    <location>
        <position position="95"/>
    </location>
    <ligand>
        <name>L-citrulline</name>
        <dbReference type="ChEBI" id="CHEBI:57743"/>
    </ligand>
</feature>
<feature type="binding site" evidence="1">
    <location>
        <position position="120"/>
    </location>
    <ligand>
        <name>ATP</name>
        <dbReference type="ChEBI" id="CHEBI:30616"/>
    </ligand>
</feature>
<feature type="binding site" evidence="1">
    <location>
        <position position="122"/>
    </location>
    <ligand>
        <name>L-aspartate</name>
        <dbReference type="ChEBI" id="CHEBI:29991"/>
    </ligand>
</feature>
<feature type="binding site" evidence="1">
    <location>
        <position position="126"/>
    </location>
    <ligand>
        <name>L-aspartate</name>
        <dbReference type="ChEBI" id="CHEBI:29991"/>
    </ligand>
</feature>
<feature type="binding site" evidence="1">
    <location>
        <position position="126"/>
    </location>
    <ligand>
        <name>L-citrulline</name>
        <dbReference type="ChEBI" id="CHEBI:57743"/>
    </ligand>
</feature>
<feature type="binding site" evidence="1">
    <location>
        <position position="127"/>
    </location>
    <ligand>
        <name>L-aspartate</name>
        <dbReference type="ChEBI" id="CHEBI:29991"/>
    </ligand>
</feature>
<feature type="binding site" evidence="1">
    <location>
        <position position="130"/>
    </location>
    <ligand>
        <name>L-citrulline</name>
        <dbReference type="ChEBI" id="CHEBI:57743"/>
    </ligand>
</feature>
<feature type="binding site" evidence="1">
    <location>
        <position position="182"/>
    </location>
    <ligand>
        <name>L-citrulline</name>
        <dbReference type="ChEBI" id="CHEBI:57743"/>
    </ligand>
</feature>
<feature type="binding site" evidence="1">
    <location>
        <position position="191"/>
    </location>
    <ligand>
        <name>L-citrulline</name>
        <dbReference type="ChEBI" id="CHEBI:57743"/>
    </ligand>
</feature>
<feature type="binding site" evidence="1">
    <location>
        <position position="267"/>
    </location>
    <ligand>
        <name>L-citrulline</name>
        <dbReference type="ChEBI" id="CHEBI:57743"/>
    </ligand>
</feature>
<feature type="binding site" evidence="1">
    <location>
        <position position="279"/>
    </location>
    <ligand>
        <name>L-citrulline</name>
        <dbReference type="ChEBI" id="CHEBI:57743"/>
    </ligand>
</feature>
<reference key="1">
    <citation type="journal article" date="2013" name="Proc. Natl. Acad. Sci. U.S.A.">
        <title>Polynucleobacter necessarius, a model for genome reduction in both free-living and symbiotic bacteria.</title>
        <authorList>
            <person name="Boscaro V."/>
            <person name="Felletti M."/>
            <person name="Vannini C."/>
            <person name="Ackerman M.S."/>
            <person name="Chain P.S."/>
            <person name="Malfatti S."/>
            <person name="Vergez L.M."/>
            <person name="Shin M."/>
            <person name="Doak T.G."/>
            <person name="Lynch M."/>
            <person name="Petroni G."/>
        </authorList>
    </citation>
    <scope>NUCLEOTIDE SEQUENCE [LARGE SCALE GENOMIC DNA]</scope>
    <source>
        <strain>STIR1</strain>
    </source>
</reference>
<sequence>MSDIKKAVLAYSGGLDTSVILKWLQDTYGCEIVTFTADFGQGEELEPARAKALQFGIKPENIFIDDLCEEFVRDFVFPMFRANTIYEGEYLLGTSIARPLIAKRQIEIARLTGADSVSHGATGKGNDQVRFELGYYALEPGIKVIVPWREWDLLSREKLMAYAEKHGIPVEMRHKQGGSPYSMDANLLHISYEGRHLENPNAEAEESMWRWTVSPEKAPDAPEIIEIEFKSGDPVAINGKAYKPHELLAELNRIGGMHGIGRLDLVENRFVGMKSRGCYETPGGTILLKAHRGIESITLDREVAHLKDDLMPRYASLIYNGLWWAPERLALQTLIDHTQQAVNGIVRLKLYKGSVSVISRDSANTLFDQNIATFDDDGGAYNQADAGGFIKLNALRMRIAETARRKRAKK</sequence>
<accession>B1XRS6</accession>